<dbReference type="EMBL" id="CP000439">
    <property type="protein sequence ID" value="ABK89912.1"/>
    <property type="molecule type" value="Genomic_DNA"/>
</dbReference>
<dbReference type="RefSeq" id="WP_003039501.1">
    <property type="nucleotide sequence ID" value="NC_008601.1"/>
</dbReference>
<dbReference type="SMR" id="A0Q6P7"/>
<dbReference type="KEGG" id="ftn:FTN_1025"/>
<dbReference type="KEGG" id="ftx:AW25_983"/>
<dbReference type="Proteomes" id="UP000000762">
    <property type="component" value="Chromosome"/>
</dbReference>
<dbReference type="GO" id="GO:0005737">
    <property type="term" value="C:cytoplasm"/>
    <property type="evidence" value="ECO:0007669"/>
    <property type="project" value="UniProtKB-SubCell"/>
</dbReference>
<dbReference type="GO" id="GO:0009379">
    <property type="term" value="C:Holliday junction helicase complex"/>
    <property type="evidence" value="ECO:0007669"/>
    <property type="project" value="InterPro"/>
</dbReference>
<dbReference type="GO" id="GO:0048476">
    <property type="term" value="C:Holliday junction resolvase complex"/>
    <property type="evidence" value="ECO:0007669"/>
    <property type="project" value="UniProtKB-UniRule"/>
</dbReference>
<dbReference type="GO" id="GO:0005524">
    <property type="term" value="F:ATP binding"/>
    <property type="evidence" value="ECO:0007669"/>
    <property type="project" value="InterPro"/>
</dbReference>
<dbReference type="GO" id="GO:0000400">
    <property type="term" value="F:four-way junction DNA binding"/>
    <property type="evidence" value="ECO:0007669"/>
    <property type="project" value="UniProtKB-UniRule"/>
</dbReference>
<dbReference type="GO" id="GO:0009378">
    <property type="term" value="F:four-way junction helicase activity"/>
    <property type="evidence" value="ECO:0007669"/>
    <property type="project" value="InterPro"/>
</dbReference>
<dbReference type="GO" id="GO:0006310">
    <property type="term" value="P:DNA recombination"/>
    <property type="evidence" value="ECO:0007669"/>
    <property type="project" value="UniProtKB-UniRule"/>
</dbReference>
<dbReference type="GO" id="GO:0006281">
    <property type="term" value="P:DNA repair"/>
    <property type="evidence" value="ECO:0007669"/>
    <property type="project" value="UniProtKB-UniRule"/>
</dbReference>
<dbReference type="CDD" id="cd14332">
    <property type="entry name" value="UBA_RuvA_C"/>
    <property type="match status" value="1"/>
</dbReference>
<dbReference type="Gene3D" id="1.10.150.20">
    <property type="entry name" value="5' to 3' exonuclease, C-terminal subdomain"/>
    <property type="match status" value="1"/>
</dbReference>
<dbReference type="Gene3D" id="1.10.8.10">
    <property type="entry name" value="DNA helicase RuvA subunit, C-terminal domain"/>
    <property type="match status" value="1"/>
</dbReference>
<dbReference type="Gene3D" id="2.40.50.140">
    <property type="entry name" value="Nucleic acid-binding proteins"/>
    <property type="match status" value="1"/>
</dbReference>
<dbReference type="HAMAP" id="MF_00031">
    <property type="entry name" value="DNA_HJ_migration_RuvA"/>
    <property type="match status" value="1"/>
</dbReference>
<dbReference type="InterPro" id="IPR013849">
    <property type="entry name" value="DNA_helicase_Holl-junc_RuvA_I"/>
</dbReference>
<dbReference type="InterPro" id="IPR003583">
    <property type="entry name" value="Hlx-hairpin-Hlx_DNA-bd_motif"/>
</dbReference>
<dbReference type="InterPro" id="IPR012340">
    <property type="entry name" value="NA-bd_OB-fold"/>
</dbReference>
<dbReference type="InterPro" id="IPR000085">
    <property type="entry name" value="RuvA"/>
</dbReference>
<dbReference type="InterPro" id="IPR010994">
    <property type="entry name" value="RuvA_2-like"/>
</dbReference>
<dbReference type="InterPro" id="IPR011114">
    <property type="entry name" value="RuvA_C"/>
</dbReference>
<dbReference type="InterPro" id="IPR036267">
    <property type="entry name" value="RuvA_C_sf"/>
</dbReference>
<dbReference type="NCBIfam" id="TIGR00084">
    <property type="entry name" value="ruvA"/>
    <property type="match status" value="1"/>
</dbReference>
<dbReference type="Pfam" id="PF14520">
    <property type="entry name" value="HHH_5"/>
    <property type="match status" value="1"/>
</dbReference>
<dbReference type="Pfam" id="PF07499">
    <property type="entry name" value="RuvA_C"/>
    <property type="match status" value="1"/>
</dbReference>
<dbReference type="Pfam" id="PF01330">
    <property type="entry name" value="RuvA_N"/>
    <property type="match status" value="1"/>
</dbReference>
<dbReference type="SMART" id="SM00278">
    <property type="entry name" value="HhH1"/>
    <property type="match status" value="2"/>
</dbReference>
<dbReference type="SUPFAM" id="SSF46929">
    <property type="entry name" value="DNA helicase RuvA subunit, C-terminal domain"/>
    <property type="match status" value="1"/>
</dbReference>
<dbReference type="SUPFAM" id="SSF50249">
    <property type="entry name" value="Nucleic acid-binding proteins"/>
    <property type="match status" value="1"/>
</dbReference>
<dbReference type="SUPFAM" id="SSF47781">
    <property type="entry name" value="RuvA domain 2-like"/>
    <property type="match status" value="1"/>
</dbReference>
<reference key="1">
    <citation type="journal article" date="2007" name="Genome Biol.">
        <title>Comparison of Francisella tularensis genomes reveals evolutionary events associated with the emergence of human pathogenic strains.</title>
        <authorList>
            <person name="Rohmer L."/>
            <person name="Fong C."/>
            <person name="Abmayr S."/>
            <person name="Wasnick M."/>
            <person name="Larson Freeman T.J."/>
            <person name="Radey M."/>
            <person name="Guina T."/>
            <person name="Svensson K."/>
            <person name="Hayden H.S."/>
            <person name="Jacobs M."/>
            <person name="Gallagher L.A."/>
            <person name="Manoil C."/>
            <person name="Ernst R.K."/>
            <person name="Drees B."/>
            <person name="Buckley D."/>
            <person name="Haugen E."/>
            <person name="Bovee D."/>
            <person name="Zhou Y."/>
            <person name="Chang J."/>
            <person name="Levy R."/>
            <person name="Lim R."/>
            <person name="Gillett W."/>
            <person name="Guenthener D."/>
            <person name="Kang A."/>
            <person name="Shaffer S.A."/>
            <person name="Taylor G."/>
            <person name="Chen J."/>
            <person name="Gallis B."/>
            <person name="D'Argenio D.A."/>
            <person name="Forsman M."/>
            <person name="Olson M.V."/>
            <person name="Goodlett D.R."/>
            <person name="Kaul R."/>
            <person name="Miller S.I."/>
            <person name="Brittnacher M.J."/>
        </authorList>
    </citation>
    <scope>NUCLEOTIDE SEQUENCE [LARGE SCALE GENOMIC DNA]</scope>
    <source>
        <strain>U112</strain>
    </source>
</reference>
<evidence type="ECO:0000255" key="1">
    <source>
        <dbReference type="HAMAP-Rule" id="MF_00031"/>
    </source>
</evidence>
<proteinExistence type="inferred from homology"/>
<sequence>MISFIKGVLIEKDPTALLIDVNGIGYEVFVPMTTFYTLGDIDSQVSLYTHFVVREDAQQLYGFKSKVDKKVFQELIKVNGIGARTAIAILSGMDSKTLLHCIENKDYALLATVPGIGKKTAERLVVEIYDKLLKMANEIYAQTSGTTTTSQDSQAQQAPTSAVLANSIFNESVDALLALGYKQKDAEKMSRSAMGDATTAAEVIRKALQGSIRSKR</sequence>
<protein>
    <recommendedName>
        <fullName evidence="1">Holliday junction branch migration complex subunit RuvA</fullName>
    </recommendedName>
</protein>
<feature type="chain" id="PRO_1000002451" description="Holliday junction branch migration complex subunit RuvA">
    <location>
        <begin position="1"/>
        <end position="216"/>
    </location>
</feature>
<feature type="region of interest" description="Domain I" evidence="1">
    <location>
        <begin position="1"/>
        <end position="64"/>
    </location>
</feature>
<feature type="region of interest" description="Domain II" evidence="1">
    <location>
        <begin position="65"/>
        <end position="143"/>
    </location>
</feature>
<feature type="region of interest" description="Flexible linker" evidence="1">
    <location>
        <begin position="144"/>
        <end position="163"/>
    </location>
</feature>
<feature type="region of interest" description="Domain III" evidence="1">
    <location>
        <begin position="164"/>
        <end position="216"/>
    </location>
</feature>
<keyword id="KW-0963">Cytoplasm</keyword>
<keyword id="KW-0227">DNA damage</keyword>
<keyword id="KW-0233">DNA recombination</keyword>
<keyword id="KW-0234">DNA repair</keyword>
<keyword id="KW-0238">DNA-binding</keyword>
<accession>A0Q6P7</accession>
<gene>
    <name evidence="1" type="primary">ruvA</name>
    <name type="ordered locus">FTN_1025</name>
</gene>
<comment type="function">
    <text evidence="1">The RuvA-RuvB-RuvC complex processes Holliday junction (HJ) DNA during genetic recombination and DNA repair, while the RuvA-RuvB complex plays an important role in the rescue of blocked DNA replication forks via replication fork reversal (RFR). RuvA specifically binds to HJ cruciform DNA, conferring on it an open structure. The RuvB hexamer acts as an ATP-dependent pump, pulling dsDNA into and through the RuvAB complex. HJ branch migration allows RuvC to scan DNA until it finds its consensus sequence, where it cleaves and resolves the cruciform DNA.</text>
</comment>
<comment type="subunit">
    <text evidence="1">Homotetramer. Forms an RuvA(8)-RuvB(12)-Holliday junction (HJ) complex. HJ DNA is sandwiched between 2 RuvA tetramers; dsDNA enters through RuvA and exits via RuvB. An RuvB hexamer assembles on each DNA strand where it exits the tetramer. Each RuvB hexamer is contacted by two RuvA subunits (via domain III) on 2 adjacent RuvB subunits; this complex drives branch migration. In the full resolvosome a probable DNA-RuvA(4)-RuvB(12)-RuvC(2) complex forms which resolves the HJ.</text>
</comment>
<comment type="subcellular location">
    <subcellularLocation>
        <location evidence="1">Cytoplasm</location>
    </subcellularLocation>
</comment>
<comment type="domain">
    <text evidence="1">Has three domains with a flexible linker between the domains II and III and assumes an 'L' shape. Domain III is highly mobile and contacts RuvB.</text>
</comment>
<comment type="similarity">
    <text evidence="1">Belongs to the RuvA family.</text>
</comment>
<name>RUVA_FRATN</name>
<organism>
    <name type="scientific">Francisella tularensis subsp. novicida (strain U112)</name>
    <dbReference type="NCBI Taxonomy" id="401614"/>
    <lineage>
        <taxon>Bacteria</taxon>
        <taxon>Pseudomonadati</taxon>
        <taxon>Pseudomonadota</taxon>
        <taxon>Gammaproteobacteria</taxon>
        <taxon>Thiotrichales</taxon>
        <taxon>Francisellaceae</taxon>
        <taxon>Francisella</taxon>
    </lineage>
</organism>